<comment type="function">
    <text evidence="1">Part of the high-affinity ATP-driven potassium transport (or Kdp) system, which catalyzes the hydrolysis of ATP coupled with the electrogenic transport of potassium into the cytoplasm. This subunit is responsible for energy coupling to the transport system and for the release of the potassium ions to the cytoplasm.</text>
</comment>
<comment type="catalytic activity">
    <reaction evidence="1">
        <text>K(+)(out) + ATP + H2O = K(+)(in) + ADP + phosphate + H(+)</text>
        <dbReference type="Rhea" id="RHEA:16777"/>
        <dbReference type="ChEBI" id="CHEBI:15377"/>
        <dbReference type="ChEBI" id="CHEBI:15378"/>
        <dbReference type="ChEBI" id="CHEBI:29103"/>
        <dbReference type="ChEBI" id="CHEBI:30616"/>
        <dbReference type="ChEBI" id="CHEBI:43474"/>
        <dbReference type="ChEBI" id="CHEBI:456216"/>
        <dbReference type="EC" id="7.2.2.6"/>
    </reaction>
    <physiologicalReaction direction="left-to-right" evidence="1">
        <dbReference type="Rhea" id="RHEA:16778"/>
    </physiologicalReaction>
</comment>
<comment type="subunit">
    <text evidence="1">The system is composed of three essential subunits: KdpA, KdpB and KdpC.</text>
</comment>
<comment type="subcellular location">
    <subcellularLocation>
        <location evidence="1">Cell inner membrane</location>
        <topology evidence="1">Multi-pass membrane protein</topology>
    </subcellularLocation>
</comment>
<comment type="similarity">
    <text evidence="1">Belongs to the cation transport ATPase (P-type) (TC 3.A.3) family. Type IA subfamily.</text>
</comment>
<sequence>MSRKQLALFEPVLLVQALTDAVKKLSPRAQWRNPVMFVVWAGSVLTTLLTLAMVTGQIAGSALFTGVISLWLWFTVLFANFAEALAEGRSKAQANSLKGVKKTAFARRLRAPRHDAQADNVPAAELRKGDIVLVKAGDIIPCDGEVIEGGASVDESAITGESAPVIRESGGDFASVTGGTRILSDWLVIACSVNPGETFLDRMIAMVEGAQRRKTPNEIALTILLIALTIVFLLATATLWPFSAWGGNAVSVTVLVALLVCLIPTTIGGLLSAIGVAGMSRMLGANVIATSGRAVEAAGDVDVLLLDKTGTITLGNRQASDFIPARGVDERTLADAAQLASLADETPEGRSIVILAKQRFNLRERDVQSLHATFVPFTAQSRMSGINIDNRMIRKGSVDAIRRHVESNGGHFPADVEQNVENVARLGATPLVVVEGARVLGVIALKDIVKGGIKERFAQLRKMGIKTVMITGDNRLTAAAIAAEAGVDDFLAEATPEAKLALIRQYQAEGRLVAMTGDGTNDAPALAQADVAVAMNSGTQAAKEAGNMVDLDSNPTKLIEVVHIGKQMLMTRGSLTTFSIANDVAKYFAIIPAAFAATYPQLNALNVMGLHSPNSAILSAVIFNALIIIFLIPLALKGVSYKPLSASAMLRRNLWIYGLGGLVVPFIGIKVIDVLLTLLGLA</sequence>
<accession>A9MUE0</accession>
<name>KDPB_SALPB</name>
<organism>
    <name type="scientific">Salmonella paratyphi B (strain ATCC BAA-1250 / SPB7)</name>
    <dbReference type="NCBI Taxonomy" id="1016998"/>
    <lineage>
        <taxon>Bacteria</taxon>
        <taxon>Pseudomonadati</taxon>
        <taxon>Pseudomonadota</taxon>
        <taxon>Gammaproteobacteria</taxon>
        <taxon>Enterobacterales</taxon>
        <taxon>Enterobacteriaceae</taxon>
        <taxon>Salmonella</taxon>
    </lineage>
</organism>
<reference key="1">
    <citation type="submission" date="2007-11" db="EMBL/GenBank/DDBJ databases">
        <authorList>
            <consortium name="The Salmonella enterica serovar Paratyphi B Genome Sequencing Project"/>
            <person name="McClelland M."/>
            <person name="Sanderson E.K."/>
            <person name="Porwollik S."/>
            <person name="Spieth J."/>
            <person name="Clifton W.S."/>
            <person name="Fulton R."/>
            <person name="Cordes M."/>
            <person name="Wollam A."/>
            <person name="Shah N."/>
            <person name="Pepin K."/>
            <person name="Bhonagiri V."/>
            <person name="Nash W."/>
            <person name="Johnson M."/>
            <person name="Thiruvilangam P."/>
            <person name="Wilson R."/>
        </authorList>
    </citation>
    <scope>NUCLEOTIDE SEQUENCE [LARGE SCALE GENOMIC DNA]</scope>
    <source>
        <strain>ATCC BAA-1250 / SPB7</strain>
    </source>
</reference>
<proteinExistence type="inferred from homology"/>
<feature type="chain" id="PRO_1000078864" description="Potassium-transporting ATPase ATP-binding subunit">
    <location>
        <begin position="1"/>
        <end position="682"/>
    </location>
</feature>
<feature type="transmembrane region" description="Helical" evidence="1">
    <location>
        <begin position="34"/>
        <end position="54"/>
    </location>
</feature>
<feature type="transmembrane region" description="Helical" evidence="1">
    <location>
        <begin position="58"/>
        <end position="78"/>
    </location>
</feature>
<feature type="transmembrane region" description="Helical" evidence="1">
    <location>
        <begin position="219"/>
        <end position="239"/>
    </location>
</feature>
<feature type="transmembrane region" description="Helical" evidence="1">
    <location>
        <begin position="254"/>
        <end position="274"/>
    </location>
</feature>
<feature type="transmembrane region" description="Helical" evidence="1">
    <location>
        <begin position="588"/>
        <end position="608"/>
    </location>
</feature>
<feature type="transmembrane region" description="Helical" evidence="1">
    <location>
        <begin position="616"/>
        <end position="636"/>
    </location>
</feature>
<feature type="transmembrane region" description="Helical" evidence="1">
    <location>
        <begin position="662"/>
        <end position="682"/>
    </location>
</feature>
<feature type="active site" description="4-aspartylphosphate intermediate" evidence="1">
    <location>
        <position position="307"/>
    </location>
</feature>
<feature type="binding site" evidence="1">
    <location>
        <position position="344"/>
    </location>
    <ligand>
        <name>ATP</name>
        <dbReference type="ChEBI" id="CHEBI:30616"/>
    </ligand>
</feature>
<feature type="binding site" evidence="1">
    <location>
        <position position="348"/>
    </location>
    <ligand>
        <name>ATP</name>
        <dbReference type="ChEBI" id="CHEBI:30616"/>
    </ligand>
</feature>
<feature type="binding site" evidence="1">
    <location>
        <begin position="377"/>
        <end position="384"/>
    </location>
    <ligand>
        <name>ATP</name>
        <dbReference type="ChEBI" id="CHEBI:30616"/>
    </ligand>
</feature>
<feature type="binding site" evidence="1">
    <location>
        <position position="395"/>
    </location>
    <ligand>
        <name>ATP</name>
        <dbReference type="ChEBI" id="CHEBI:30616"/>
    </ligand>
</feature>
<feature type="binding site" evidence="1">
    <location>
        <position position="518"/>
    </location>
    <ligand>
        <name>Mg(2+)</name>
        <dbReference type="ChEBI" id="CHEBI:18420"/>
    </ligand>
</feature>
<feature type="binding site" evidence="1">
    <location>
        <position position="522"/>
    </location>
    <ligand>
        <name>Mg(2+)</name>
        <dbReference type="ChEBI" id="CHEBI:18420"/>
    </ligand>
</feature>
<protein>
    <recommendedName>
        <fullName evidence="1">Potassium-transporting ATPase ATP-binding subunit</fullName>
        <ecNumber evidence="1">7.2.2.6</ecNumber>
    </recommendedName>
    <alternativeName>
        <fullName evidence="1">ATP phosphohydrolase [potassium-transporting] B chain</fullName>
    </alternativeName>
    <alternativeName>
        <fullName evidence="1">Potassium-binding and translocating subunit B</fullName>
    </alternativeName>
    <alternativeName>
        <fullName evidence="1">Potassium-translocating ATPase B chain</fullName>
    </alternativeName>
</protein>
<gene>
    <name evidence="1" type="primary">kdpB</name>
    <name type="ordered locus">SPAB_02831</name>
</gene>
<keyword id="KW-0067">ATP-binding</keyword>
<keyword id="KW-0997">Cell inner membrane</keyword>
<keyword id="KW-1003">Cell membrane</keyword>
<keyword id="KW-0406">Ion transport</keyword>
<keyword id="KW-0460">Magnesium</keyword>
<keyword id="KW-0472">Membrane</keyword>
<keyword id="KW-0479">Metal-binding</keyword>
<keyword id="KW-0547">Nucleotide-binding</keyword>
<keyword id="KW-0597">Phosphoprotein</keyword>
<keyword id="KW-0630">Potassium</keyword>
<keyword id="KW-0633">Potassium transport</keyword>
<keyword id="KW-1278">Translocase</keyword>
<keyword id="KW-0812">Transmembrane</keyword>
<keyword id="KW-1133">Transmembrane helix</keyword>
<keyword id="KW-0813">Transport</keyword>
<evidence type="ECO:0000255" key="1">
    <source>
        <dbReference type="HAMAP-Rule" id="MF_00285"/>
    </source>
</evidence>
<dbReference type="EC" id="7.2.2.6" evidence="1"/>
<dbReference type="EMBL" id="CP000886">
    <property type="protein sequence ID" value="ABX68203.1"/>
    <property type="molecule type" value="Genomic_DNA"/>
</dbReference>
<dbReference type="RefSeq" id="WP_000088034.1">
    <property type="nucleotide sequence ID" value="NC_010102.1"/>
</dbReference>
<dbReference type="SMR" id="A9MUE0"/>
<dbReference type="KEGG" id="spq:SPAB_02831"/>
<dbReference type="PATRIC" id="fig|1016998.12.peg.2676"/>
<dbReference type="HOGENOM" id="CLU_025728_2_0_6"/>
<dbReference type="BioCyc" id="SENT1016998:SPAB_RS11530-MONOMER"/>
<dbReference type="Proteomes" id="UP000008556">
    <property type="component" value="Chromosome"/>
</dbReference>
<dbReference type="GO" id="GO:0005886">
    <property type="term" value="C:plasma membrane"/>
    <property type="evidence" value="ECO:0007669"/>
    <property type="project" value="UniProtKB-SubCell"/>
</dbReference>
<dbReference type="GO" id="GO:0005524">
    <property type="term" value="F:ATP binding"/>
    <property type="evidence" value="ECO:0007669"/>
    <property type="project" value="UniProtKB-UniRule"/>
</dbReference>
<dbReference type="GO" id="GO:0016887">
    <property type="term" value="F:ATP hydrolysis activity"/>
    <property type="evidence" value="ECO:0007669"/>
    <property type="project" value="InterPro"/>
</dbReference>
<dbReference type="GO" id="GO:0000287">
    <property type="term" value="F:magnesium ion binding"/>
    <property type="evidence" value="ECO:0007669"/>
    <property type="project" value="UniProtKB-UniRule"/>
</dbReference>
<dbReference type="GO" id="GO:0008556">
    <property type="term" value="F:P-type potassium transmembrane transporter activity"/>
    <property type="evidence" value="ECO:0007669"/>
    <property type="project" value="UniProtKB-UniRule"/>
</dbReference>
<dbReference type="CDD" id="cd02078">
    <property type="entry name" value="P-type_ATPase_K"/>
    <property type="match status" value="1"/>
</dbReference>
<dbReference type="FunFam" id="2.70.150.10:FF:000010">
    <property type="entry name" value="Potassium-transporting ATPase ATP-binding subunit"/>
    <property type="match status" value="1"/>
</dbReference>
<dbReference type="FunFam" id="3.40.1110.10:FF:000007">
    <property type="entry name" value="Potassium-transporting ATPase ATP-binding subunit"/>
    <property type="match status" value="1"/>
</dbReference>
<dbReference type="Gene3D" id="3.40.1110.10">
    <property type="entry name" value="Calcium-transporting ATPase, cytoplasmic domain N"/>
    <property type="match status" value="1"/>
</dbReference>
<dbReference type="Gene3D" id="2.70.150.10">
    <property type="entry name" value="Calcium-transporting ATPase, cytoplasmic transduction domain A"/>
    <property type="match status" value="1"/>
</dbReference>
<dbReference type="Gene3D" id="3.40.50.1000">
    <property type="entry name" value="HAD superfamily/HAD-like"/>
    <property type="match status" value="1"/>
</dbReference>
<dbReference type="HAMAP" id="MF_00285">
    <property type="entry name" value="KdpB"/>
    <property type="match status" value="1"/>
</dbReference>
<dbReference type="InterPro" id="IPR023299">
    <property type="entry name" value="ATPase_P-typ_cyto_dom_N"/>
</dbReference>
<dbReference type="InterPro" id="IPR018303">
    <property type="entry name" value="ATPase_P-typ_P_site"/>
</dbReference>
<dbReference type="InterPro" id="IPR023298">
    <property type="entry name" value="ATPase_P-typ_TM_dom_sf"/>
</dbReference>
<dbReference type="InterPro" id="IPR008250">
    <property type="entry name" value="ATPase_P-typ_transduc_dom_A_sf"/>
</dbReference>
<dbReference type="InterPro" id="IPR036412">
    <property type="entry name" value="HAD-like_sf"/>
</dbReference>
<dbReference type="InterPro" id="IPR023214">
    <property type="entry name" value="HAD_sf"/>
</dbReference>
<dbReference type="InterPro" id="IPR006391">
    <property type="entry name" value="P-type_ATPase_bsu_IA"/>
</dbReference>
<dbReference type="InterPro" id="IPR001757">
    <property type="entry name" value="P_typ_ATPase"/>
</dbReference>
<dbReference type="InterPro" id="IPR044492">
    <property type="entry name" value="P_typ_ATPase_HD_dom"/>
</dbReference>
<dbReference type="NCBIfam" id="TIGR01494">
    <property type="entry name" value="ATPase_P-type"/>
    <property type="match status" value="2"/>
</dbReference>
<dbReference type="NCBIfam" id="TIGR01497">
    <property type="entry name" value="kdpB"/>
    <property type="match status" value="1"/>
</dbReference>
<dbReference type="PANTHER" id="PTHR43743">
    <property type="entry name" value="POTASSIUM-TRANSPORTING ATPASE ATP-BINDING SUBUNIT"/>
    <property type="match status" value="1"/>
</dbReference>
<dbReference type="PANTHER" id="PTHR43743:SF1">
    <property type="entry name" value="POTASSIUM-TRANSPORTING ATPASE ATP-BINDING SUBUNIT"/>
    <property type="match status" value="1"/>
</dbReference>
<dbReference type="Pfam" id="PF00122">
    <property type="entry name" value="E1-E2_ATPase"/>
    <property type="match status" value="1"/>
</dbReference>
<dbReference type="Pfam" id="PF00702">
    <property type="entry name" value="Hydrolase"/>
    <property type="match status" value="1"/>
</dbReference>
<dbReference type="PRINTS" id="PR00119">
    <property type="entry name" value="CATATPASE"/>
</dbReference>
<dbReference type="SFLD" id="SFLDG00002">
    <property type="entry name" value="C1.7:_P-type_atpase_like"/>
    <property type="match status" value="1"/>
</dbReference>
<dbReference type="SFLD" id="SFLDF00027">
    <property type="entry name" value="p-type_atpase"/>
    <property type="match status" value="1"/>
</dbReference>
<dbReference type="SUPFAM" id="SSF81653">
    <property type="entry name" value="Calcium ATPase, transduction domain A"/>
    <property type="match status" value="1"/>
</dbReference>
<dbReference type="SUPFAM" id="SSF81665">
    <property type="entry name" value="Calcium ATPase, transmembrane domain M"/>
    <property type="match status" value="1"/>
</dbReference>
<dbReference type="SUPFAM" id="SSF56784">
    <property type="entry name" value="HAD-like"/>
    <property type="match status" value="1"/>
</dbReference>
<dbReference type="SUPFAM" id="SSF81660">
    <property type="entry name" value="Metal cation-transporting ATPase, ATP-binding domain N"/>
    <property type="match status" value="1"/>
</dbReference>
<dbReference type="PROSITE" id="PS00154">
    <property type="entry name" value="ATPASE_E1_E2"/>
    <property type="match status" value="1"/>
</dbReference>